<feature type="signal peptide" evidence="2">
    <location>
        <begin position="1"/>
        <end position="50"/>
    </location>
</feature>
<feature type="chain" id="PRO_0000149596" description="Outer capsid glycoprotein VP7" evidence="2">
    <location>
        <begin position="51"/>
        <end position="326"/>
    </location>
</feature>
<feature type="region of interest" description="CNP motif; interaction with ITGAV/ITGB3" evidence="2">
    <location>
        <begin position="165"/>
        <end position="167"/>
    </location>
</feature>
<feature type="region of interest" description="GPR motif; interaction with ITGAX/ITGB2" evidence="2">
    <location>
        <begin position="253"/>
        <end position="255"/>
    </location>
</feature>
<feature type="binding site" evidence="2">
    <location>
        <position position="95"/>
    </location>
    <ligand>
        <name>Ca(2+)</name>
        <dbReference type="ChEBI" id="CHEBI:29108"/>
        <label>1</label>
    </ligand>
</feature>
<feature type="binding site" evidence="2">
    <location>
        <position position="177"/>
    </location>
    <ligand>
        <name>Ca(2+)</name>
        <dbReference type="ChEBI" id="CHEBI:29108"/>
        <label>2</label>
    </ligand>
</feature>
<feature type="binding site" evidence="2">
    <location>
        <position position="206"/>
    </location>
    <ligand>
        <name>Ca(2+)</name>
        <dbReference type="ChEBI" id="CHEBI:29108"/>
        <label>1</label>
    </ligand>
</feature>
<feature type="binding site" evidence="2">
    <location>
        <position position="214"/>
    </location>
    <ligand>
        <name>Ca(2+)</name>
        <dbReference type="ChEBI" id="CHEBI:29108"/>
        <label>1</label>
    </ligand>
</feature>
<feature type="binding site" evidence="2">
    <location>
        <position position="216"/>
    </location>
    <ligand>
        <name>Ca(2+)</name>
        <dbReference type="ChEBI" id="CHEBI:29108"/>
        <label>1</label>
    </ligand>
</feature>
<feature type="binding site" evidence="2">
    <location>
        <position position="228"/>
    </location>
    <ligand>
        <name>Ca(2+)</name>
        <dbReference type="ChEBI" id="CHEBI:29108"/>
        <label>2</label>
    </ligand>
</feature>
<feature type="binding site" evidence="2">
    <location>
        <position position="229"/>
    </location>
    <ligand>
        <name>Ca(2+)</name>
        <dbReference type="ChEBI" id="CHEBI:29108"/>
        <label>2</label>
    </ligand>
</feature>
<feature type="binding site" evidence="2">
    <location>
        <position position="231"/>
    </location>
    <ligand>
        <name>Ca(2+)</name>
        <dbReference type="ChEBI" id="CHEBI:29108"/>
        <label>2</label>
    </ligand>
</feature>
<feature type="binding site" evidence="2">
    <location>
        <position position="301"/>
    </location>
    <ligand>
        <name>Ca(2+)</name>
        <dbReference type="ChEBI" id="CHEBI:29108"/>
        <label>2</label>
    </ligand>
</feature>
<feature type="glycosylation site" description="N-linked (GlcNAc...) asparagine; by host" evidence="1">
    <location>
        <position position="69"/>
    </location>
</feature>
<feature type="glycosylation site" description="N-linked (GlcNAc...) asparagine; by host" evidence="1">
    <location>
        <position position="238"/>
    </location>
</feature>
<feature type="disulfide bond" evidence="2">
    <location>
        <begin position="82"/>
        <end position="135"/>
    </location>
</feature>
<feature type="disulfide bond" evidence="2">
    <location>
        <begin position="165"/>
        <end position="249"/>
    </location>
</feature>
<feature type="disulfide bond" evidence="2">
    <location>
        <begin position="191"/>
        <end position="244"/>
    </location>
</feature>
<feature type="disulfide bond" evidence="2">
    <location>
        <begin position="196"/>
        <end position="207"/>
    </location>
</feature>
<feature type="splice variant" id="VSP_038618" description="In isoform 2." evidence="3">
    <location>
        <begin position="1"/>
        <end position="29"/>
    </location>
</feature>
<keyword id="KW-0024">Alternative initiation</keyword>
<keyword id="KW-0106">Calcium</keyword>
<keyword id="KW-0167">Capsid protein</keyword>
<keyword id="KW-1015">Disulfide bond</keyword>
<keyword id="KW-0325">Glycoprotein</keyword>
<keyword id="KW-1038">Host endoplasmic reticulum</keyword>
<keyword id="KW-0945">Host-virus interaction</keyword>
<keyword id="KW-0479">Metal-binding</keyword>
<keyword id="KW-1152">Outer capsid protein</keyword>
<keyword id="KW-0732">Signal</keyword>
<keyword id="KW-1146">T=13 icosahedral capsid protein</keyword>
<keyword id="KW-0946">Virion</keyword>
<reference key="1">
    <citation type="journal article" date="1989" name="Virology">
        <title>The VP7 gene of a new G serotype of human rotavirus (B37) is similar to G3 proteins in the antigenic c region.</title>
        <authorList>
            <person name="Hum C.P."/>
            <person name="Dyall-Smith M.L."/>
            <person name="Holmes I.H."/>
        </authorList>
    </citation>
    <scope>NUCLEOTIDE SEQUENCE [GENOMIC RNA]</scope>
</reference>
<organism>
    <name type="scientific">Rotavirus A (strain RVA/Human/Indonesia/B37/XXXX/G8P[X])</name>
    <name type="common">RV-A</name>
    <dbReference type="NCBI Taxonomy" id="10949"/>
    <lineage>
        <taxon>Viruses</taxon>
        <taxon>Riboviria</taxon>
        <taxon>Orthornavirae</taxon>
        <taxon>Duplornaviricota</taxon>
        <taxon>Resentoviricetes</taxon>
        <taxon>Reovirales</taxon>
        <taxon>Sedoreoviridae</taxon>
        <taxon>Rotavirus</taxon>
        <taxon>Rotavirus A</taxon>
    </lineage>
</organism>
<dbReference type="EMBL" id="J04334">
    <property type="protein sequence ID" value="AAA47344.1"/>
    <property type="molecule type" value="Genomic_RNA"/>
</dbReference>
<dbReference type="PIR" id="A31469">
    <property type="entry name" value="VGXRB7"/>
</dbReference>
<dbReference type="SMR" id="P17071"/>
<dbReference type="GO" id="GO:0044166">
    <property type="term" value="C:host cell endoplasmic reticulum lumen"/>
    <property type="evidence" value="ECO:0007669"/>
    <property type="project" value="UniProtKB-SubCell"/>
</dbReference>
<dbReference type="GO" id="GO:0039621">
    <property type="term" value="C:T=13 icosahedral viral capsid"/>
    <property type="evidence" value="ECO:0007669"/>
    <property type="project" value="UniProtKB-UniRule"/>
</dbReference>
<dbReference type="GO" id="GO:0039624">
    <property type="term" value="C:viral outer capsid"/>
    <property type="evidence" value="ECO:0007669"/>
    <property type="project" value="UniProtKB-UniRule"/>
</dbReference>
<dbReference type="GO" id="GO:0046872">
    <property type="term" value="F:metal ion binding"/>
    <property type="evidence" value="ECO:0007669"/>
    <property type="project" value="UniProtKB-KW"/>
</dbReference>
<dbReference type="Gene3D" id="3.40.50.11130">
    <property type="entry name" value="Glycoprotein VP7, domain 1"/>
    <property type="match status" value="1"/>
</dbReference>
<dbReference type="Gene3D" id="2.60.120.800">
    <property type="entry name" value="Rotavirus outer-layer protein VP7, domain 2"/>
    <property type="match status" value="1"/>
</dbReference>
<dbReference type="HAMAP" id="MF_04130">
    <property type="entry name" value="Rota_VP7"/>
    <property type="match status" value="1"/>
</dbReference>
<dbReference type="HAMAP" id="MF_04131">
    <property type="entry name" value="Rota_VP7_A"/>
    <property type="match status" value="1"/>
</dbReference>
<dbReference type="InterPro" id="IPR001963">
    <property type="entry name" value="VP7"/>
</dbReference>
<dbReference type="InterPro" id="IPR042207">
    <property type="entry name" value="VP7_1"/>
</dbReference>
<dbReference type="InterPro" id="IPR042210">
    <property type="entry name" value="VP7_2"/>
</dbReference>
<dbReference type="Pfam" id="PF00434">
    <property type="entry name" value="VP7"/>
    <property type="match status" value="1"/>
</dbReference>
<name>VP7_ROTHB</name>
<organismHost>
    <name type="scientific">Homo sapiens</name>
    <name type="common">Human</name>
    <dbReference type="NCBI Taxonomy" id="9606"/>
</organismHost>
<protein>
    <recommendedName>
        <fullName evidence="2">Outer capsid glycoprotein VP7</fullName>
    </recommendedName>
</protein>
<comment type="function">
    <text evidence="2">Calcium-binding protein that interacts with rotavirus cell receptors once the initial attachment by VP4 has been achieved. Rotavirus attachment and entry into the host cell probably involves multiple sequential contacts between the outer capsid proteins VP4 and VP7, and the cell receptors. Following entry into the host cell, low intracellular or intravesicular Ca(2+) concentration probably causes the calcium-stabilized VP7 trimers to dissociate from the virion. This step is probably necessary for the membrane-disrupting entry step and the release of VP4, which is locked onto the virion by VP7.</text>
</comment>
<comment type="subunit">
    <text evidence="2">Homotrimer; disulfide-linked. 2 Ca(2+) ions bound at each subunit interface in the trimer hold the trimer together. Interacts with the intermediate capsid protein VP6. Interacts with the outer capsid protein VP5*.</text>
</comment>
<comment type="subcellular location">
    <subcellularLocation>
        <location evidence="2">Virion</location>
    </subcellularLocation>
    <subcellularLocation>
        <location evidence="2">Host endoplasmic reticulum lumen</location>
    </subcellularLocation>
    <text evidence="2">The outer layer contains 780 copies of VP7, grouped as 260 trimers. Immature double-layered particles assembled in the cytoplasm bud across the membrane of the endoplasmic reticulum, acquiring during this process a transient lipid membrane that is modified with the ER resident viral glycoproteins NSP4 and VP7; these enveloped particles also contain VP4. As the particles move towards the interior of the ER cisternae, the transient lipid membrane and the non-structural protein NSP4 are lost, while the virus surface proteins VP4 and VP7 rearrange to form the outermost virus protein layer, yielding mature infectious triple-layered particles.</text>
</comment>
<comment type="alternative products">
    <event type="alternative initiation"/>
    <isoform>
        <id>P17071-1</id>
        <name>1</name>
        <sequence type="displayed"/>
    </isoform>
    <isoform>
        <id>P17071-2</id>
        <name>2</name>
        <sequence type="described" ref="VSP_038618"/>
    </isoform>
</comment>
<comment type="PTM">
    <text evidence="2">N-glycosylated.</text>
</comment>
<comment type="PTM">
    <text evidence="2">The N-terminus is blocked possibly by pyroglutamic acid.</text>
</comment>
<comment type="miscellaneous">
    <text evidence="2">Some rotavirus strains are neuraminidase-sensitive and require sialic acid to attach to the cell surface. Some rotavirus strains are integrin-dependent. Some rotavirus strains depend on ganglioside for their entry into the host cell. Hsp70 also seems to be involved in the entry of some strains.</text>
</comment>
<comment type="miscellaneous">
    <text evidence="2">In group A rotaviruses, VP7 defines the G serotype.</text>
</comment>
<comment type="miscellaneous">
    <molecule>Isoform 2</molecule>
    <text evidence="3">Produced by alternative initiation at Met-30 of isoform 1.</text>
</comment>
<comment type="similarity">
    <text evidence="2">Belongs to the rotavirus VP7 family.</text>
</comment>
<accession>P17071</accession>
<proteinExistence type="inferred from homology"/>
<sequence>MYGIEYTTTLTFLILLVLLNYILKSITRIMDYILYTFLLFIVIVTPFVNSQNYGINLPITGSMDTNYQNVSNPEPFLTSTLCLYYPVEAETEIADSSWKDTLSQLFLTKGWPTGSVYLKSYTDIATFSINPQLYCDYNIVLMKYNANSELDMSELADLILNEWLCNPMDIALYYYQQSSESKQWISMGDSCTDKVCPLNTQTLRIGCLTTDTTTFEEVATAEKLVITDVVDGVNYKINVTTTTCTIRNCKKLGPRENVAVIQVGGSFILDITADPTTAPQTERMMRINWKKWWQVFYTVVDYVNQIIQTMSKRSRSLDSASFYYRI</sequence>
<evidence type="ECO:0000255" key="1"/>
<evidence type="ECO:0000255" key="2">
    <source>
        <dbReference type="HAMAP-Rule" id="MF_04131"/>
    </source>
</evidence>
<evidence type="ECO:0000305" key="3"/>